<name>SH2D5_HUMAN</name>
<sequence>MQKAGAGGRRASDCGLAPHRPRCITKFAQYVGSFPVDDLDTQESVWLVQQQLWALKDCPRRRAVILKFSLQGLKIYSGEGEVLLMAHALRRILYSTWCPADCQFAFMARNPRSPASKLFCHLFVGSQPGEVQILHLLLCRSFQLAYLLQHPEERAQPEPCPGPTGEVPLKPLSSSGGLVREPFGRDQLSQNVHALVSFRRLPAEGLVGSGKELPESEGRARHARLGNPYCSPTLVRKKAIRSKVIRSGAYRGCTYETQLQLSAREAFPAAWEAWPRGPGGHSCLVESEGSLTENIWAFAGISRPCALALLRRDVLGAFLLWPELGASGQWCLSVRTQCGVVPHQVFRNHLGRYCLEHLPAEFPSLEALVENHAVTERSLFCPLDMGRLNPTYEEQDCGPPGRPPRTLRPLSHAKSEAELQGLG</sequence>
<evidence type="ECO:0000250" key="1">
    <source>
        <dbReference type="UniProtKB" id="Q8JZW5"/>
    </source>
</evidence>
<evidence type="ECO:0000255" key="2">
    <source>
        <dbReference type="PROSITE-ProRule" id="PRU00148"/>
    </source>
</evidence>
<evidence type="ECO:0000255" key="3">
    <source>
        <dbReference type="PROSITE-ProRule" id="PRU00191"/>
    </source>
</evidence>
<evidence type="ECO:0000256" key="4">
    <source>
        <dbReference type="SAM" id="MobiDB-lite"/>
    </source>
</evidence>
<evidence type="ECO:0000269" key="5">
    <source>
    </source>
</evidence>
<evidence type="ECO:0000305" key="6"/>
<evidence type="ECO:0000312" key="7">
    <source>
        <dbReference type="HGNC" id="HGNC:28819"/>
    </source>
</evidence>
<keyword id="KW-0025">Alternative splicing</keyword>
<keyword id="KW-1267">Proteomics identification</keyword>
<keyword id="KW-1185">Reference proteome</keyword>
<keyword id="KW-0727">SH2 domain</keyword>
<keyword id="KW-0770">Synapse</keyword>
<comment type="function">
    <text evidence="1">May be involved in synaptic plasticity regulation through the control of Rac-GTP levels.</text>
</comment>
<comment type="subunit">
    <text evidence="5">Interacts with BCR.</text>
</comment>
<comment type="interaction">
    <interactant intactId="EBI-15101685">
        <id>Q6ZV89-1</id>
    </interactant>
    <interactant intactId="EBI-712838">
        <id>P11274</id>
        <label>BCR</label>
    </interactant>
    <organismsDiffer>false</organismsDiffer>
    <experiments>2</experiments>
</comment>
<comment type="subcellular location">
    <subcellularLocation>
        <location evidence="1">Postsynaptic density</location>
    </subcellularLocation>
</comment>
<comment type="alternative products">
    <event type="alternative splicing"/>
    <isoform>
        <id>Q6ZV89-1</id>
        <name>1</name>
        <sequence type="displayed"/>
    </isoform>
    <isoform>
        <id>Q6ZV89-2</id>
        <name>2</name>
        <sequence type="described" ref="VSP_045938"/>
    </isoform>
</comment>
<comment type="sequence caution" evidence="6">
    <conflict type="erroneous initiation">
        <sequence resource="EMBL-CDS" id="BAC85974"/>
    </conflict>
    <text>Truncated N-terminus.</text>
</comment>
<proteinExistence type="evidence at protein level"/>
<accession>Q6ZV89</accession>
<accession>B7Z3W3</accession>
<accession>Q5SSJ2</accession>
<gene>
    <name evidence="7" type="primary">SH2D5</name>
</gene>
<feature type="chain" id="PRO_0000231581" description="SH2 domain-containing protein 5">
    <location>
        <begin position="1"/>
        <end position="423"/>
    </location>
</feature>
<feature type="domain" description="PID" evidence="2">
    <location>
        <begin position="28"/>
        <end position="146"/>
    </location>
</feature>
<feature type="domain" description="SH2" evidence="3">
    <location>
        <begin position="296"/>
        <end position="392"/>
    </location>
</feature>
<feature type="region of interest" description="Disordered" evidence="4">
    <location>
        <begin position="392"/>
        <end position="423"/>
    </location>
</feature>
<feature type="splice variant" id="VSP_045938" description="In isoform 2." evidence="6">
    <location>
        <begin position="1"/>
        <end position="84"/>
    </location>
</feature>
<reference key="1">
    <citation type="journal article" date="2004" name="Nat. Genet.">
        <title>Complete sequencing and characterization of 21,243 full-length human cDNAs.</title>
        <authorList>
            <person name="Ota T."/>
            <person name="Suzuki Y."/>
            <person name="Nishikawa T."/>
            <person name="Otsuki T."/>
            <person name="Sugiyama T."/>
            <person name="Irie R."/>
            <person name="Wakamatsu A."/>
            <person name="Hayashi K."/>
            <person name="Sato H."/>
            <person name="Nagai K."/>
            <person name="Kimura K."/>
            <person name="Makita H."/>
            <person name="Sekine M."/>
            <person name="Obayashi M."/>
            <person name="Nishi T."/>
            <person name="Shibahara T."/>
            <person name="Tanaka T."/>
            <person name="Ishii S."/>
            <person name="Yamamoto J."/>
            <person name="Saito K."/>
            <person name="Kawai Y."/>
            <person name="Isono Y."/>
            <person name="Nakamura Y."/>
            <person name="Nagahari K."/>
            <person name="Murakami K."/>
            <person name="Yasuda T."/>
            <person name="Iwayanagi T."/>
            <person name="Wagatsuma M."/>
            <person name="Shiratori A."/>
            <person name="Sudo H."/>
            <person name="Hosoiri T."/>
            <person name="Kaku Y."/>
            <person name="Kodaira H."/>
            <person name="Kondo H."/>
            <person name="Sugawara M."/>
            <person name="Takahashi M."/>
            <person name="Kanda K."/>
            <person name="Yokoi T."/>
            <person name="Furuya T."/>
            <person name="Kikkawa E."/>
            <person name="Omura Y."/>
            <person name="Abe K."/>
            <person name="Kamihara K."/>
            <person name="Katsuta N."/>
            <person name="Sato K."/>
            <person name="Tanikawa M."/>
            <person name="Yamazaki M."/>
            <person name="Ninomiya K."/>
            <person name="Ishibashi T."/>
            <person name="Yamashita H."/>
            <person name="Murakawa K."/>
            <person name="Fujimori K."/>
            <person name="Tanai H."/>
            <person name="Kimata M."/>
            <person name="Watanabe M."/>
            <person name="Hiraoka S."/>
            <person name="Chiba Y."/>
            <person name="Ishida S."/>
            <person name="Ono Y."/>
            <person name="Takiguchi S."/>
            <person name="Watanabe S."/>
            <person name="Yosida M."/>
            <person name="Hotuta T."/>
            <person name="Kusano J."/>
            <person name="Kanehori K."/>
            <person name="Takahashi-Fujii A."/>
            <person name="Hara H."/>
            <person name="Tanase T.-O."/>
            <person name="Nomura Y."/>
            <person name="Togiya S."/>
            <person name="Komai F."/>
            <person name="Hara R."/>
            <person name="Takeuchi K."/>
            <person name="Arita M."/>
            <person name="Imose N."/>
            <person name="Musashino K."/>
            <person name="Yuuki H."/>
            <person name="Oshima A."/>
            <person name="Sasaki N."/>
            <person name="Aotsuka S."/>
            <person name="Yoshikawa Y."/>
            <person name="Matsunawa H."/>
            <person name="Ichihara T."/>
            <person name="Shiohata N."/>
            <person name="Sano S."/>
            <person name="Moriya S."/>
            <person name="Momiyama H."/>
            <person name="Satoh N."/>
            <person name="Takami S."/>
            <person name="Terashima Y."/>
            <person name="Suzuki O."/>
            <person name="Nakagawa S."/>
            <person name="Senoh A."/>
            <person name="Mizoguchi H."/>
            <person name="Goto Y."/>
            <person name="Shimizu F."/>
            <person name="Wakebe H."/>
            <person name="Hishigaki H."/>
            <person name="Watanabe T."/>
            <person name="Sugiyama A."/>
            <person name="Takemoto M."/>
            <person name="Kawakami B."/>
            <person name="Yamazaki M."/>
            <person name="Watanabe K."/>
            <person name="Kumagai A."/>
            <person name="Itakura S."/>
            <person name="Fukuzumi Y."/>
            <person name="Fujimori Y."/>
            <person name="Komiyama M."/>
            <person name="Tashiro H."/>
            <person name="Tanigami A."/>
            <person name="Fujiwara T."/>
            <person name="Ono T."/>
            <person name="Yamada K."/>
            <person name="Fujii Y."/>
            <person name="Ozaki K."/>
            <person name="Hirao M."/>
            <person name="Ohmori Y."/>
            <person name="Kawabata A."/>
            <person name="Hikiji T."/>
            <person name="Kobatake N."/>
            <person name="Inagaki H."/>
            <person name="Ikema Y."/>
            <person name="Okamoto S."/>
            <person name="Okitani R."/>
            <person name="Kawakami T."/>
            <person name="Noguchi S."/>
            <person name="Itoh T."/>
            <person name="Shigeta K."/>
            <person name="Senba T."/>
            <person name="Matsumura K."/>
            <person name="Nakajima Y."/>
            <person name="Mizuno T."/>
            <person name="Morinaga M."/>
            <person name="Sasaki M."/>
            <person name="Togashi T."/>
            <person name="Oyama M."/>
            <person name="Hata H."/>
            <person name="Watanabe M."/>
            <person name="Komatsu T."/>
            <person name="Mizushima-Sugano J."/>
            <person name="Satoh T."/>
            <person name="Shirai Y."/>
            <person name="Takahashi Y."/>
            <person name="Nakagawa K."/>
            <person name="Okumura K."/>
            <person name="Nagase T."/>
            <person name="Nomura N."/>
            <person name="Kikuchi H."/>
            <person name="Masuho Y."/>
            <person name="Yamashita R."/>
            <person name="Nakai K."/>
            <person name="Yada T."/>
            <person name="Nakamura Y."/>
            <person name="Ohara O."/>
            <person name="Isogai T."/>
            <person name="Sugano S."/>
        </authorList>
    </citation>
    <scope>NUCLEOTIDE SEQUENCE [LARGE SCALE MRNA] (ISOFORM 1)</scope>
    <source>
        <tissue>Hippocampus</tissue>
        <tissue>Thalamus</tissue>
    </source>
</reference>
<reference key="2">
    <citation type="journal article" date="2006" name="Nature">
        <title>The DNA sequence and biological annotation of human chromosome 1.</title>
        <authorList>
            <person name="Gregory S.G."/>
            <person name="Barlow K.F."/>
            <person name="McLay K.E."/>
            <person name="Kaul R."/>
            <person name="Swarbreck D."/>
            <person name="Dunham A."/>
            <person name="Scott C.E."/>
            <person name="Howe K.L."/>
            <person name="Woodfine K."/>
            <person name="Spencer C.C.A."/>
            <person name="Jones M.C."/>
            <person name="Gillson C."/>
            <person name="Searle S."/>
            <person name="Zhou Y."/>
            <person name="Kokocinski F."/>
            <person name="McDonald L."/>
            <person name="Evans R."/>
            <person name="Phillips K."/>
            <person name="Atkinson A."/>
            <person name="Cooper R."/>
            <person name="Jones C."/>
            <person name="Hall R.E."/>
            <person name="Andrews T.D."/>
            <person name="Lloyd C."/>
            <person name="Ainscough R."/>
            <person name="Almeida J.P."/>
            <person name="Ambrose K.D."/>
            <person name="Anderson F."/>
            <person name="Andrew R.W."/>
            <person name="Ashwell R.I.S."/>
            <person name="Aubin K."/>
            <person name="Babbage A.K."/>
            <person name="Bagguley C.L."/>
            <person name="Bailey J."/>
            <person name="Beasley H."/>
            <person name="Bethel G."/>
            <person name="Bird C.P."/>
            <person name="Bray-Allen S."/>
            <person name="Brown J.Y."/>
            <person name="Brown A.J."/>
            <person name="Buckley D."/>
            <person name="Burton J."/>
            <person name="Bye J."/>
            <person name="Carder C."/>
            <person name="Chapman J.C."/>
            <person name="Clark S.Y."/>
            <person name="Clarke G."/>
            <person name="Clee C."/>
            <person name="Cobley V."/>
            <person name="Collier R.E."/>
            <person name="Corby N."/>
            <person name="Coville G.J."/>
            <person name="Davies J."/>
            <person name="Deadman R."/>
            <person name="Dunn M."/>
            <person name="Earthrowl M."/>
            <person name="Ellington A.G."/>
            <person name="Errington H."/>
            <person name="Frankish A."/>
            <person name="Frankland J."/>
            <person name="French L."/>
            <person name="Garner P."/>
            <person name="Garnett J."/>
            <person name="Gay L."/>
            <person name="Ghori M.R.J."/>
            <person name="Gibson R."/>
            <person name="Gilby L.M."/>
            <person name="Gillett W."/>
            <person name="Glithero R.J."/>
            <person name="Grafham D.V."/>
            <person name="Griffiths C."/>
            <person name="Griffiths-Jones S."/>
            <person name="Grocock R."/>
            <person name="Hammond S."/>
            <person name="Harrison E.S.I."/>
            <person name="Hart E."/>
            <person name="Haugen E."/>
            <person name="Heath P.D."/>
            <person name="Holmes S."/>
            <person name="Holt K."/>
            <person name="Howden P.J."/>
            <person name="Hunt A.R."/>
            <person name="Hunt S.E."/>
            <person name="Hunter G."/>
            <person name="Isherwood J."/>
            <person name="James R."/>
            <person name="Johnson C."/>
            <person name="Johnson D."/>
            <person name="Joy A."/>
            <person name="Kay M."/>
            <person name="Kershaw J.K."/>
            <person name="Kibukawa M."/>
            <person name="Kimberley A.M."/>
            <person name="King A."/>
            <person name="Knights A.J."/>
            <person name="Lad H."/>
            <person name="Laird G."/>
            <person name="Lawlor S."/>
            <person name="Leongamornlert D.A."/>
            <person name="Lloyd D.M."/>
            <person name="Loveland J."/>
            <person name="Lovell J."/>
            <person name="Lush M.J."/>
            <person name="Lyne R."/>
            <person name="Martin S."/>
            <person name="Mashreghi-Mohammadi M."/>
            <person name="Matthews L."/>
            <person name="Matthews N.S.W."/>
            <person name="McLaren S."/>
            <person name="Milne S."/>
            <person name="Mistry S."/>
            <person name="Moore M.J.F."/>
            <person name="Nickerson T."/>
            <person name="O'Dell C.N."/>
            <person name="Oliver K."/>
            <person name="Palmeiri A."/>
            <person name="Palmer S.A."/>
            <person name="Parker A."/>
            <person name="Patel D."/>
            <person name="Pearce A.V."/>
            <person name="Peck A.I."/>
            <person name="Pelan S."/>
            <person name="Phelps K."/>
            <person name="Phillimore B.J."/>
            <person name="Plumb R."/>
            <person name="Rajan J."/>
            <person name="Raymond C."/>
            <person name="Rouse G."/>
            <person name="Saenphimmachak C."/>
            <person name="Sehra H.K."/>
            <person name="Sheridan E."/>
            <person name="Shownkeen R."/>
            <person name="Sims S."/>
            <person name="Skuce C.D."/>
            <person name="Smith M."/>
            <person name="Steward C."/>
            <person name="Subramanian S."/>
            <person name="Sycamore N."/>
            <person name="Tracey A."/>
            <person name="Tromans A."/>
            <person name="Van Helmond Z."/>
            <person name="Wall M."/>
            <person name="Wallis J.M."/>
            <person name="White S."/>
            <person name="Whitehead S.L."/>
            <person name="Wilkinson J.E."/>
            <person name="Willey D.L."/>
            <person name="Williams H."/>
            <person name="Wilming L."/>
            <person name="Wray P.W."/>
            <person name="Wu Z."/>
            <person name="Coulson A."/>
            <person name="Vaudin M."/>
            <person name="Sulston J.E."/>
            <person name="Durbin R.M."/>
            <person name="Hubbard T."/>
            <person name="Wooster R."/>
            <person name="Dunham I."/>
            <person name="Carter N.P."/>
            <person name="McVean G."/>
            <person name="Ross M.T."/>
            <person name="Harrow J."/>
            <person name="Olson M.V."/>
            <person name="Beck S."/>
            <person name="Rogers J."/>
            <person name="Bentley D.R."/>
        </authorList>
    </citation>
    <scope>NUCLEOTIDE SEQUENCE [LARGE SCALE GENOMIC DNA]</scope>
</reference>
<reference key="3">
    <citation type="submission" date="2005-07" db="EMBL/GenBank/DDBJ databases">
        <authorList>
            <person name="Mural R.J."/>
            <person name="Istrail S."/>
            <person name="Sutton G."/>
            <person name="Florea L."/>
            <person name="Halpern A.L."/>
            <person name="Mobarry C.M."/>
            <person name="Lippert R."/>
            <person name="Walenz B."/>
            <person name="Shatkay H."/>
            <person name="Dew I."/>
            <person name="Miller J.R."/>
            <person name="Flanigan M.J."/>
            <person name="Edwards N.J."/>
            <person name="Bolanos R."/>
            <person name="Fasulo D."/>
            <person name="Halldorsson B.V."/>
            <person name="Hannenhalli S."/>
            <person name="Turner R."/>
            <person name="Yooseph S."/>
            <person name="Lu F."/>
            <person name="Nusskern D.R."/>
            <person name="Shue B.C."/>
            <person name="Zheng X.H."/>
            <person name="Zhong F."/>
            <person name="Delcher A.L."/>
            <person name="Huson D.H."/>
            <person name="Kravitz S.A."/>
            <person name="Mouchard L."/>
            <person name="Reinert K."/>
            <person name="Remington K.A."/>
            <person name="Clark A.G."/>
            <person name="Waterman M.S."/>
            <person name="Eichler E.E."/>
            <person name="Adams M.D."/>
            <person name="Hunkapiller M.W."/>
            <person name="Myers E.W."/>
            <person name="Venter J.C."/>
        </authorList>
    </citation>
    <scope>NUCLEOTIDE SEQUENCE [LARGE SCALE GENOMIC DNA]</scope>
</reference>
<reference key="4">
    <citation type="journal article" date="2009" name="Anal. Chem.">
        <title>Lys-N and trypsin cover complementary parts of the phosphoproteome in a refined SCX-based approach.</title>
        <authorList>
            <person name="Gauci S."/>
            <person name="Helbig A.O."/>
            <person name="Slijper M."/>
            <person name="Krijgsveld J."/>
            <person name="Heck A.J."/>
            <person name="Mohammed S."/>
        </authorList>
    </citation>
    <scope>IDENTIFICATION BY MASS SPECTROMETRY [LARGE SCALE ANALYSIS]</scope>
</reference>
<reference key="5">
    <citation type="journal article" date="2014" name="J. Biol. Chem.">
        <title>src homology 2 domain containing protein 5 (sh2d5) binds the breakpoint cluster region protein, BCR, and regulates levels of Rac1-GTP.</title>
        <authorList>
            <person name="Gray E.J."/>
            <person name="Petsalaki E."/>
            <person name="James D.A."/>
            <person name="Bagshaw R.D."/>
            <person name="Stacey M.M."/>
            <person name="Rocks O."/>
            <person name="Gingras A.C."/>
            <person name="Pawson T."/>
        </authorList>
    </citation>
    <scope>INTERACTION WITH BCR</scope>
</reference>
<dbReference type="EMBL" id="AK124869">
    <property type="protein sequence ID" value="BAC85974.1"/>
    <property type="status" value="ALT_INIT"/>
    <property type="molecule type" value="mRNA"/>
</dbReference>
<dbReference type="EMBL" id="AK296431">
    <property type="protein sequence ID" value="BAH12349.1"/>
    <property type="molecule type" value="mRNA"/>
</dbReference>
<dbReference type="EMBL" id="AL663074">
    <property type="status" value="NOT_ANNOTATED_CDS"/>
    <property type="molecule type" value="Genomic_DNA"/>
</dbReference>
<dbReference type="EMBL" id="CH471134">
    <property type="protein sequence ID" value="EAW94947.1"/>
    <property type="molecule type" value="Genomic_DNA"/>
</dbReference>
<dbReference type="CCDS" id="CCDS41280.1">
    <molecule id="Q6ZV89-2"/>
</dbReference>
<dbReference type="CCDS" id="CCDS44080.1">
    <molecule id="Q6ZV89-1"/>
</dbReference>
<dbReference type="RefSeq" id="NP_001096630.1">
    <molecule id="Q6ZV89-2"/>
    <property type="nucleotide sequence ID" value="NM_001103160.2"/>
</dbReference>
<dbReference type="RefSeq" id="NP_001096631.1">
    <molecule id="Q6ZV89-1"/>
    <property type="nucleotide sequence ID" value="NM_001103161.2"/>
</dbReference>
<dbReference type="RefSeq" id="XP_011539761.1">
    <property type="nucleotide sequence ID" value="XM_011541459.1"/>
</dbReference>
<dbReference type="RefSeq" id="XP_011539762.1">
    <molecule id="Q6ZV89-1"/>
    <property type="nucleotide sequence ID" value="XM_011541460.2"/>
</dbReference>
<dbReference type="RefSeq" id="XP_011539763.1">
    <molecule id="Q6ZV89-1"/>
    <property type="nucleotide sequence ID" value="XM_011541461.3"/>
</dbReference>
<dbReference type="RefSeq" id="XP_054192545.1">
    <molecule id="Q6ZV89-1"/>
    <property type="nucleotide sequence ID" value="XM_054336570.1"/>
</dbReference>
<dbReference type="RefSeq" id="XP_054192546.1">
    <molecule id="Q6ZV89-1"/>
    <property type="nucleotide sequence ID" value="XM_054336571.1"/>
</dbReference>
<dbReference type="SMR" id="Q6ZV89"/>
<dbReference type="BioGRID" id="134738">
    <property type="interactions" value="10"/>
</dbReference>
<dbReference type="FunCoup" id="Q6ZV89">
    <property type="interactions" value="109"/>
</dbReference>
<dbReference type="IntAct" id="Q6ZV89">
    <property type="interactions" value="7"/>
</dbReference>
<dbReference type="MINT" id="Q6ZV89"/>
<dbReference type="STRING" id="9606.ENSP00000406026"/>
<dbReference type="GlyGen" id="Q6ZV89">
    <property type="glycosylation" value="1 site"/>
</dbReference>
<dbReference type="iPTMnet" id="Q6ZV89"/>
<dbReference type="PhosphoSitePlus" id="Q6ZV89"/>
<dbReference type="SwissPalm" id="Q6ZV89"/>
<dbReference type="BioMuta" id="SH2D5"/>
<dbReference type="DMDM" id="363548475"/>
<dbReference type="jPOST" id="Q6ZV89"/>
<dbReference type="MassIVE" id="Q6ZV89"/>
<dbReference type="PaxDb" id="9606-ENSP00000406026"/>
<dbReference type="PeptideAtlas" id="Q6ZV89"/>
<dbReference type="ProteomicsDB" id="68401">
    <molecule id="Q6ZV89-1"/>
</dbReference>
<dbReference type="Antibodypedia" id="48002">
    <property type="antibodies" value="88 antibodies from 25 providers"/>
</dbReference>
<dbReference type="DNASU" id="400745"/>
<dbReference type="Ensembl" id="ENST00000375031.5">
    <molecule id="Q6ZV89-2"/>
    <property type="protein sequence ID" value="ENSP00000364171.1"/>
    <property type="gene ID" value="ENSG00000189410.12"/>
</dbReference>
<dbReference type="Ensembl" id="ENST00000444387.7">
    <molecule id="Q6ZV89-1"/>
    <property type="protein sequence ID" value="ENSP00000406026.2"/>
    <property type="gene ID" value="ENSG00000189410.12"/>
</dbReference>
<dbReference type="GeneID" id="400745"/>
<dbReference type="KEGG" id="hsa:400745"/>
<dbReference type="MANE-Select" id="ENST00000444387.7">
    <property type="protein sequence ID" value="ENSP00000406026.2"/>
    <property type="RefSeq nucleotide sequence ID" value="NM_001103161.2"/>
    <property type="RefSeq protein sequence ID" value="NP_001096631.1"/>
</dbReference>
<dbReference type="UCSC" id="uc001bdt.1">
    <molecule id="Q6ZV89-1"/>
    <property type="organism name" value="human"/>
</dbReference>
<dbReference type="AGR" id="HGNC:28819"/>
<dbReference type="CTD" id="400745"/>
<dbReference type="DisGeNET" id="400745"/>
<dbReference type="GeneCards" id="SH2D5"/>
<dbReference type="HGNC" id="HGNC:28819">
    <property type="gene designation" value="SH2D5"/>
</dbReference>
<dbReference type="HPA" id="ENSG00000189410">
    <property type="expression patterns" value="Tissue enhanced (brain, testis)"/>
</dbReference>
<dbReference type="neXtProt" id="NX_Q6ZV89"/>
<dbReference type="OpenTargets" id="ENSG00000189410"/>
<dbReference type="PharmGKB" id="PA142670927"/>
<dbReference type="VEuPathDB" id="HostDB:ENSG00000189410"/>
<dbReference type="eggNOG" id="ENOG502RXFM">
    <property type="taxonomic scope" value="Eukaryota"/>
</dbReference>
<dbReference type="GeneTree" id="ENSGT00510000048936"/>
<dbReference type="HOGENOM" id="CLU_053535_0_0_1"/>
<dbReference type="InParanoid" id="Q6ZV89"/>
<dbReference type="OMA" id="QDCGPEG"/>
<dbReference type="OrthoDB" id="10013007at2759"/>
<dbReference type="PAN-GO" id="Q6ZV89">
    <property type="GO annotations" value="1 GO annotation based on evolutionary models"/>
</dbReference>
<dbReference type="PhylomeDB" id="Q6ZV89"/>
<dbReference type="TreeFam" id="TF334487"/>
<dbReference type="PathwayCommons" id="Q6ZV89"/>
<dbReference type="SignaLink" id="Q6ZV89"/>
<dbReference type="BioGRID-ORCS" id="400745">
    <property type="hits" value="15 hits in 1147 CRISPR screens"/>
</dbReference>
<dbReference type="GenomeRNAi" id="400745"/>
<dbReference type="Pharos" id="Q6ZV89">
    <property type="development level" value="Tdark"/>
</dbReference>
<dbReference type="PRO" id="PR:Q6ZV89"/>
<dbReference type="Proteomes" id="UP000005640">
    <property type="component" value="Chromosome 1"/>
</dbReference>
<dbReference type="RNAct" id="Q6ZV89">
    <property type="molecule type" value="protein"/>
</dbReference>
<dbReference type="Bgee" id="ENSG00000189410">
    <property type="expression patterns" value="Expressed in nucleus accumbens and 108 other cell types or tissues"/>
</dbReference>
<dbReference type="ExpressionAtlas" id="Q6ZV89">
    <property type="expression patterns" value="baseline and differential"/>
</dbReference>
<dbReference type="GO" id="GO:0014069">
    <property type="term" value="C:postsynaptic density"/>
    <property type="evidence" value="ECO:0000250"/>
    <property type="project" value="UniProtKB"/>
</dbReference>
<dbReference type="CDD" id="cd13157">
    <property type="entry name" value="PTB_tensin-related"/>
    <property type="match status" value="1"/>
</dbReference>
<dbReference type="CDD" id="cd00173">
    <property type="entry name" value="SH2"/>
    <property type="match status" value="1"/>
</dbReference>
<dbReference type="FunFam" id="2.30.29.30:FF:000290">
    <property type="entry name" value="SH2 domain-containing protein 5"/>
    <property type="match status" value="1"/>
</dbReference>
<dbReference type="FunFam" id="3.30.505.10:FF:000072">
    <property type="entry name" value="SH2 domain-containing protein 5"/>
    <property type="match status" value="1"/>
</dbReference>
<dbReference type="Gene3D" id="2.30.29.30">
    <property type="entry name" value="Pleckstrin-homology domain (PH domain)/Phosphotyrosine-binding domain (PTB)"/>
    <property type="match status" value="1"/>
</dbReference>
<dbReference type="Gene3D" id="3.30.505.10">
    <property type="entry name" value="SH2 domain"/>
    <property type="match status" value="1"/>
</dbReference>
<dbReference type="InterPro" id="IPR011993">
    <property type="entry name" value="PH-like_dom_sf"/>
</dbReference>
<dbReference type="InterPro" id="IPR006020">
    <property type="entry name" value="PTB/PI_dom"/>
</dbReference>
<dbReference type="InterPro" id="IPR000980">
    <property type="entry name" value="SH2"/>
</dbReference>
<dbReference type="InterPro" id="IPR036860">
    <property type="entry name" value="SH2_dom_sf"/>
</dbReference>
<dbReference type="PANTHER" id="PTHR15832:SF3">
    <property type="entry name" value="SH2 DOMAIN-CONTAINING PROTEIN 5"/>
    <property type="match status" value="1"/>
</dbReference>
<dbReference type="PANTHER" id="PTHR15832">
    <property type="entry name" value="SHC (SRC HOMOLOGY DOMAIN C-TERMINAL) ADAPTOR HOMOLOG"/>
    <property type="match status" value="1"/>
</dbReference>
<dbReference type="SMART" id="SM00462">
    <property type="entry name" value="PTB"/>
    <property type="match status" value="1"/>
</dbReference>
<dbReference type="SUPFAM" id="SSF50729">
    <property type="entry name" value="PH domain-like"/>
    <property type="match status" value="1"/>
</dbReference>
<dbReference type="SUPFAM" id="SSF55550">
    <property type="entry name" value="SH2 domain"/>
    <property type="match status" value="1"/>
</dbReference>
<dbReference type="PROSITE" id="PS01179">
    <property type="entry name" value="PID"/>
    <property type="match status" value="1"/>
</dbReference>
<dbReference type="PROSITE" id="PS50001">
    <property type="entry name" value="SH2"/>
    <property type="match status" value="1"/>
</dbReference>
<organism>
    <name type="scientific">Homo sapiens</name>
    <name type="common">Human</name>
    <dbReference type="NCBI Taxonomy" id="9606"/>
    <lineage>
        <taxon>Eukaryota</taxon>
        <taxon>Metazoa</taxon>
        <taxon>Chordata</taxon>
        <taxon>Craniata</taxon>
        <taxon>Vertebrata</taxon>
        <taxon>Euteleostomi</taxon>
        <taxon>Mammalia</taxon>
        <taxon>Eutheria</taxon>
        <taxon>Euarchontoglires</taxon>
        <taxon>Primates</taxon>
        <taxon>Haplorrhini</taxon>
        <taxon>Catarrhini</taxon>
        <taxon>Hominidae</taxon>
        <taxon>Homo</taxon>
    </lineage>
</organism>
<protein>
    <recommendedName>
        <fullName evidence="7">SH2 domain-containing protein 5</fullName>
    </recommendedName>
</protein>